<organism>
    <name type="scientific">Psychrobacter arcticus (strain DSM 17307 / VKM B-2377 / 273-4)</name>
    <dbReference type="NCBI Taxonomy" id="259536"/>
    <lineage>
        <taxon>Bacteria</taxon>
        <taxon>Pseudomonadati</taxon>
        <taxon>Pseudomonadota</taxon>
        <taxon>Gammaproteobacteria</taxon>
        <taxon>Moraxellales</taxon>
        <taxon>Moraxellaceae</taxon>
        <taxon>Psychrobacter</taxon>
    </lineage>
</organism>
<name>SYT_PSYA2</name>
<evidence type="ECO:0000255" key="1">
    <source>
        <dbReference type="HAMAP-Rule" id="MF_00184"/>
    </source>
</evidence>
<evidence type="ECO:0000255" key="2">
    <source>
        <dbReference type="PROSITE-ProRule" id="PRU01228"/>
    </source>
</evidence>
<keyword id="KW-0030">Aminoacyl-tRNA synthetase</keyword>
<keyword id="KW-0067">ATP-binding</keyword>
<keyword id="KW-0963">Cytoplasm</keyword>
<keyword id="KW-0436">Ligase</keyword>
<keyword id="KW-0479">Metal-binding</keyword>
<keyword id="KW-0547">Nucleotide-binding</keyword>
<keyword id="KW-0648">Protein biosynthesis</keyword>
<keyword id="KW-1185">Reference proteome</keyword>
<keyword id="KW-0694">RNA-binding</keyword>
<keyword id="KW-0820">tRNA-binding</keyword>
<keyword id="KW-0862">Zinc</keyword>
<reference key="1">
    <citation type="journal article" date="2010" name="Appl. Environ. Microbiol.">
        <title>The genome sequence of Psychrobacter arcticus 273-4, a psychroactive Siberian permafrost bacterium, reveals mechanisms for adaptation to low-temperature growth.</title>
        <authorList>
            <person name="Ayala-del-Rio H.L."/>
            <person name="Chain P.S."/>
            <person name="Grzymski J.J."/>
            <person name="Ponder M.A."/>
            <person name="Ivanova N."/>
            <person name="Bergholz P.W."/>
            <person name="Di Bartolo G."/>
            <person name="Hauser L."/>
            <person name="Land M."/>
            <person name="Bakermans C."/>
            <person name="Rodrigues D."/>
            <person name="Klappenbach J."/>
            <person name="Zarka D."/>
            <person name="Larimer F."/>
            <person name="Richardson P."/>
            <person name="Murray A."/>
            <person name="Thomashow M."/>
            <person name="Tiedje J.M."/>
        </authorList>
    </citation>
    <scope>NUCLEOTIDE SEQUENCE [LARGE SCALE GENOMIC DNA]</scope>
    <source>
        <strain>DSM 17307 / VKM B-2377 / 273-4</strain>
    </source>
</reference>
<feature type="chain" id="PRO_1000020478" description="Threonine--tRNA ligase">
    <location>
        <begin position="1"/>
        <end position="644"/>
    </location>
</feature>
<feature type="domain" description="TGS" evidence="2">
    <location>
        <begin position="1"/>
        <end position="61"/>
    </location>
</feature>
<feature type="region of interest" description="Catalytic" evidence="1">
    <location>
        <begin position="242"/>
        <end position="533"/>
    </location>
</feature>
<feature type="binding site" evidence="1">
    <location>
        <position position="333"/>
    </location>
    <ligand>
        <name>Zn(2+)</name>
        <dbReference type="ChEBI" id="CHEBI:29105"/>
    </ligand>
</feature>
<feature type="binding site" evidence="1">
    <location>
        <position position="384"/>
    </location>
    <ligand>
        <name>Zn(2+)</name>
        <dbReference type="ChEBI" id="CHEBI:29105"/>
    </ligand>
</feature>
<feature type="binding site" evidence="1">
    <location>
        <position position="510"/>
    </location>
    <ligand>
        <name>Zn(2+)</name>
        <dbReference type="ChEBI" id="CHEBI:29105"/>
    </ligand>
</feature>
<dbReference type="EC" id="6.1.1.3" evidence="1"/>
<dbReference type="EMBL" id="CP000082">
    <property type="protein sequence ID" value="AAZ19945.1"/>
    <property type="molecule type" value="Genomic_DNA"/>
</dbReference>
<dbReference type="RefSeq" id="WP_011281351.1">
    <property type="nucleotide sequence ID" value="NC_007204.1"/>
</dbReference>
<dbReference type="SMR" id="Q4FPW3"/>
<dbReference type="STRING" id="259536.Psyc_2098"/>
<dbReference type="KEGG" id="par:Psyc_2098"/>
<dbReference type="eggNOG" id="COG0441">
    <property type="taxonomic scope" value="Bacteria"/>
</dbReference>
<dbReference type="HOGENOM" id="CLU_008554_0_1_6"/>
<dbReference type="OrthoDB" id="9802304at2"/>
<dbReference type="Proteomes" id="UP000000546">
    <property type="component" value="Chromosome"/>
</dbReference>
<dbReference type="GO" id="GO:0005829">
    <property type="term" value="C:cytosol"/>
    <property type="evidence" value="ECO:0007669"/>
    <property type="project" value="TreeGrafter"/>
</dbReference>
<dbReference type="GO" id="GO:0005524">
    <property type="term" value="F:ATP binding"/>
    <property type="evidence" value="ECO:0007669"/>
    <property type="project" value="UniProtKB-UniRule"/>
</dbReference>
<dbReference type="GO" id="GO:0046872">
    <property type="term" value="F:metal ion binding"/>
    <property type="evidence" value="ECO:0007669"/>
    <property type="project" value="UniProtKB-KW"/>
</dbReference>
<dbReference type="GO" id="GO:0004829">
    <property type="term" value="F:threonine-tRNA ligase activity"/>
    <property type="evidence" value="ECO:0007669"/>
    <property type="project" value="UniProtKB-UniRule"/>
</dbReference>
<dbReference type="GO" id="GO:0000049">
    <property type="term" value="F:tRNA binding"/>
    <property type="evidence" value="ECO:0007669"/>
    <property type="project" value="UniProtKB-KW"/>
</dbReference>
<dbReference type="GO" id="GO:0006435">
    <property type="term" value="P:threonyl-tRNA aminoacylation"/>
    <property type="evidence" value="ECO:0007669"/>
    <property type="project" value="UniProtKB-UniRule"/>
</dbReference>
<dbReference type="CDD" id="cd01667">
    <property type="entry name" value="TGS_ThrRS"/>
    <property type="match status" value="1"/>
</dbReference>
<dbReference type="CDD" id="cd00860">
    <property type="entry name" value="ThrRS_anticodon"/>
    <property type="match status" value="1"/>
</dbReference>
<dbReference type="CDD" id="cd00771">
    <property type="entry name" value="ThrRS_core"/>
    <property type="match status" value="1"/>
</dbReference>
<dbReference type="FunFam" id="3.10.20.30:FF:000005">
    <property type="entry name" value="Threonine--tRNA ligase"/>
    <property type="match status" value="1"/>
</dbReference>
<dbReference type="FunFam" id="3.30.54.20:FF:000002">
    <property type="entry name" value="Threonine--tRNA ligase"/>
    <property type="match status" value="1"/>
</dbReference>
<dbReference type="FunFam" id="3.30.930.10:FF:000002">
    <property type="entry name" value="Threonine--tRNA ligase"/>
    <property type="match status" value="1"/>
</dbReference>
<dbReference type="FunFam" id="3.40.50.800:FF:000001">
    <property type="entry name" value="Threonine--tRNA ligase"/>
    <property type="match status" value="1"/>
</dbReference>
<dbReference type="FunFam" id="3.30.980.10:FF:000005">
    <property type="entry name" value="Threonyl-tRNA synthetase, mitochondrial"/>
    <property type="match status" value="1"/>
</dbReference>
<dbReference type="Gene3D" id="3.10.20.30">
    <property type="match status" value="1"/>
</dbReference>
<dbReference type="Gene3D" id="3.30.54.20">
    <property type="match status" value="1"/>
</dbReference>
<dbReference type="Gene3D" id="3.40.50.800">
    <property type="entry name" value="Anticodon-binding domain"/>
    <property type="match status" value="1"/>
</dbReference>
<dbReference type="Gene3D" id="3.30.930.10">
    <property type="entry name" value="Bira Bifunctional Protein, Domain 2"/>
    <property type="match status" value="1"/>
</dbReference>
<dbReference type="Gene3D" id="3.30.980.10">
    <property type="entry name" value="Threonyl-trna Synthetase, Chain A, domain 2"/>
    <property type="match status" value="1"/>
</dbReference>
<dbReference type="HAMAP" id="MF_00184">
    <property type="entry name" value="Thr_tRNA_synth"/>
    <property type="match status" value="1"/>
</dbReference>
<dbReference type="InterPro" id="IPR002314">
    <property type="entry name" value="aa-tRNA-synt_IIb"/>
</dbReference>
<dbReference type="InterPro" id="IPR006195">
    <property type="entry name" value="aa-tRNA-synth_II"/>
</dbReference>
<dbReference type="InterPro" id="IPR045864">
    <property type="entry name" value="aa-tRNA-synth_II/BPL/LPL"/>
</dbReference>
<dbReference type="InterPro" id="IPR004154">
    <property type="entry name" value="Anticodon-bd"/>
</dbReference>
<dbReference type="InterPro" id="IPR036621">
    <property type="entry name" value="Anticodon-bd_dom_sf"/>
</dbReference>
<dbReference type="InterPro" id="IPR012675">
    <property type="entry name" value="Beta-grasp_dom_sf"/>
</dbReference>
<dbReference type="InterPro" id="IPR004095">
    <property type="entry name" value="TGS"/>
</dbReference>
<dbReference type="InterPro" id="IPR012676">
    <property type="entry name" value="TGS-like"/>
</dbReference>
<dbReference type="InterPro" id="IPR002320">
    <property type="entry name" value="Thr-tRNA-ligase_IIa"/>
</dbReference>
<dbReference type="InterPro" id="IPR018163">
    <property type="entry name" value="Thr/Ala-tRNA-synth_IIc_edit"/>
</dbReference>
<dbReference type="InterPro" id="IPR047246">
    <property type="entry name" value="ThrRS_anticodon"/>
</dbReference>
<dbReference type="InterPro" id="IPR033728">
    <property type="entry name" value="ThrRS_core"/>
</dbReference>
<dbReference type="InterPro" id="IPR012947">
    <property type="entry name" value="tRNA_SAD"/>
</dbReference>
<dbReference type="NCBIfam" id="TIGR00418">
    <property type="entry name" value="thrS"/>
    <property type="match status" value="1"/>
</dbReference>
<dbReference type="PANTHER" id="PTHR11451:SF44">
    <property type="entry name" value="THREONINE--TRNA LIGASE, CHLOROPLASTIC_MITOCHONDRIAL 2"/>
    <property type="match status" value="1"/>
</dbReference>
<dbReference type="PANTHER" id="PTHR11451">
    <property type="entry name" value="THREONINE-TRNA LIGASE"/>
    <property type="match status" value="1"/>
</dbReference>
<dbReference type="Pfam" id="PF03129">
    <property type="entry name" value="HGTP_anticodon"/>
    <property type="match status" value="1"/>
</dbReference>
<dbReference type="Pfam" id="PF02824">
    <property type="entry name" value="TGS"/>
    <property type="match status" value="1"/>
</dbReference>
<dbReference type="Pfam" id="PF00587">
    <property type="entry name" value="tRNA-synt_2b"/>
    <property type="match status" value="1"/>
</dbReference>
<dbReference type="Pfam" id="PF07973">
    <property type="entry name" value="tRNA_SAD"/>
    <property type="match status" value="1"/>
</dbReference>
<dbReference type="PRINTS" id="PR01047">
    <property type="entry name" value="TRNASYNTHTHR"/>
</dbReference>
<dbReference type="SMART" id="SM00863">
    <property type="entry name" value="tRNA_SAD"/>
    <property type="match status" value="1"/>
</dbReference>
<dbReference type="SUPFAM" id="SSF52954">
    <property type="entry name" value="Class II aaRS ABD-related"/>
    <property type="match status" value="1"/>
</dbReference>
<dbReference type="SUPFAM" id="SSF55681">
    <property type="entry name" value="Class II aaRS and biotin synthetases"/>
    <property type="match status" value="1"/>
</dbReference>
<dbReference type="SUPFAM" id="SSF81271">
    <property type="entry name" value="TGS-like"/>
    <property type="match status" value="1"/>
</dbReference>
<dbReference type="SUPFAM" id="SSF55186">
    <property type="entry name" value="ThrRS/AlaRS common domain"/>
    <property type="match status" value="1"/>
</dbReference>
<dbReference type="PROSITE" id="PS50862">
    <property type="entry name" value="AA_TRNA_LIGASE_II"/>
    <property type="match status" value="1"/>
</dbReference>
<dbReference type="PROSITE" id="PS51880">
    <property type="entry name" value="TGS"/>
    <property type="match status" value="1"/>
</dbReference>
<protein>
    <recommendedName>
        <fullName evidence="1">Threonine--tRNA ligase</fullName>
        <ecNumber evidence="1">6.1.1.3</ecNumber>
    </recommendedName>
    <alternativeName>
        <fullName evidence="1">Threonyl-tRNA synthetase</fullName>
        <shortName evidence="1">ThrRS</shortName>
    </alternativeName>
</protein>
<proteinExistence type="inferred from homology"/>
<accession>Q4FPW3</accession>
<sequence>MVAITLPDGSVKNFEGNTTVMEVAQSIGTGLAKATVAGRVDGHLVDAHDPIVADAKVEIVTPRDDDGVDIIRHSCAHLLGHAVKQLYPDVKMVIGPVIDDGFYYDIYSETPFTPEHMAAIEKRMMELIKQDYDVIKKITPRAEVIKIFEERGEDYKLKLINDMPGEEAFGLYHHQEYVDMCRGPHVPNTRFLKVFKLTKMSGAYWRGDAKNEQLQRIYGTAWADKKDLKTYIQRIEEAEKRDHRKIGKALNLFHMQEQAPGMVFWHANGWTIYQVLEQYMRKVQQDNGYEEIKTPQIVDRSLWERSGHWGNYATNMFTTSSEKRDYAVKPMNCPCHVQVFNQGLKSYRDLPLRMAEFGSCHRNEPSGSLHGLMRVRGFTQDDAHIFCTQSQIQQEVADFIKLTLAVYEDFGFNNIIMKLSTRPEKRVGSDESWDFAEKALADALDNSGLDWAYLPGEGAFYGPKIEFSLKDSLGRVWQCGTIQVDPNMPERLDAEFVNEQNEREVPIMLHRAILGSFERFIGILIENYAGWMPVWLAPQQVVVMNITDKQAEACENVVNELKKSGLRAISDLRNEKIGFKIREKTLERIPYMLVLGDKEVESGSVNVRTREGENLGVMSVAEFIILVETAVAEKGRQTPKIDQE</sequence>
<gene>
    <name evidence="1" type="primary">thrS</name>
    <name type="ordered locus">Psyc_2098</name>
</gene>
<comment type="function">
    <text evidence="1">Catalyzes the attachment of threonine to tRNA(Thr) in a two-step reaction: L-threonine is first activated by ATP to form Thr-AMP and then transferred to the acceptor end of tRNA(Thr). Also edits incorrectly charged L-seryl-tRNA(Thr).</text>
</comment>
<comment type="catalytic activity">
    <reaction evidence="1">
        <text>tRNA(Thr) + L-threonine + ATP = L-threonyl-tRNA(Thr) + AMP + diphosphate + H(+)</text>
        <dbReference type="Rhea" id="RHEA:24624"/>
        <dbReference type="Rhea" id="RHEA-COMP:9670"/>
        <dbReference type="Rhea" id="RHEA-COMP:9704"/>
        <dbReference type="ChEBI" id="CHEBI:15378"/>
        <dbReference type="ChEBI" id="CHEBI:30616"/>
        <dbReference type="ChEBI" id="CHEBI:33019"/>
        <dbReference type="ChEBI" id="CHEBI:57926"/>
        <dbReference type="ChEBI" id="CHEBI:78442"/>
        <dbReference type="ChEBI" id="CHEBI:78534"/>
        <dbReference type="ChEBI" id="CHEBI:456215"/>
        <dbReference type="EC" id="6.1.1.3"/>
    </reaction>
</comment>
<comment type="cofactor">
    <cofactor evidence="1">
        <name>Zn(2+)</name>
        <dbReference type="ChEBI" id="CHEBI:29105"/>
    </cofactor>
    <text evidence="1">Binds 1 zinc ion per subunit.</text>
</comment>
<comment type="subunit">
    <text evidence="1">Homodimer.</text>
</comment>
<comment type="subcellular location">
    <subcellularLocation>
        <location evidence="1">Cytoplasm</location>
    </subcellularLocation>
</comment>
<comment type="similarity">
    <text evidence="1">Belongs to the class-II aminoacyl-tRNA synthetase family.</text>
</comment>